<reference key="1">
    <citation type="journal article" date="2011" name="BMC Genomics">
        <title>Complete genome sequence of the filamentous anoxygenic phototrophic bacterium Chloroflexus aurantiacus.</title>
        <authorList>
            <person name="Tang K.H."/>
            <person name="Barry K."/>
            <person name="Chertkov O."/>
            <person name="Dalin E."/>
            <person name="Han C.S."/>
            <person name="Hauser L.J."/>
            <person name="Honchak B.M."/>
            <person name="Karbach L.E."/>
            <person name="Land M.L."/>
            <person name="Lapidus A."/>
            <person name="Larimer F.W."/>
            <person name="Mikhailova N."/>
            <person name="Pitluck S."/>
            <person name="Pierson B.K."/>
            <person name="Blankenship R.E."/>
        </authorList>
    </citation>
    <scope>NUCLEOTIDE SEQUENCE [LARGE SCALE GENOMIC DNA]</scope>
    <source>
        <strain>ATCC 29366 / DSM 635 / J-10-fl</strain>
    </source>
</reference>
<comment type="function">
    <text evidence="1">Endoribonuclease that initiates mRNA decay.</text>
</comment>
<comment type="subcellular location">
    <subcellularLocation>
        <location evidence="1">Cell membrane</location>
        <topology evidence="1">Single-pass membrane protein</topology>
    </subcellularLocation>
</comment>
<comment type="similarity">
    <text evidence="1">Belongs to the RNase Y family.</text>
</comment>
<accession>A9WJM3</accession>
<evidence type="ECO:0000255" key="1">
    <source>
        <dbReference type="HAMAP-Rule" id="MF_00335"/>
    </source>
</evidence>
<evidence type="ECO:0000255" key="2">
    <source>
        <dbReference type="PROSITE-ProRule" id="PRU01175"/>
    </source>
</evidence>
<protein>
    <recommendedName>
        <fullName evidence="1">Ribonuclease Y</fullName>
        <shortName evidence="1">RNase Y</shortName>
        <ecNumber evidence="1">3.1.-.-</ecNumber>
    </recommendedName>
</protein>
<dbReference type="EC" id="3.1.-.-" evidence="1"/>
<dbReference type="EMBL" id="CP000909">
    <property type="protein sequence ID" value="ABY35927.1"/>
    <property type="molecule type" value="Genomic_DNA"/>
</dbReference>
<dbReference type="RefSeq" id="WP_012258580.1">
    <property type="nucleotide sequence ID" value="NC_010175.1"/>
</dbReference>
<dbReference type="RefSeq" id="YP_001636316.1">
    <property type="nucleotide sequence ID" value="NC_010175.1"/>
</dbReference>
<dbReference type="SMR" id="A9WJM3"/>
<dbReference type="FunCoup" id="A9WJM3">
    <property type="interactions" value="111"/>
</dbReference>
<dbReference type="STRING" id="324602.Caur_2722"/>
<dbReference type="EnsemblBacteria" id="ABY35927">
    <property type="protein sequence ID" value="ABY35927"/>
    <property type="gene ID" value="Caur_2722"/>
</dbReference>
<dbReference type="KEGG" id="cau:Caur_2722"/>
<dbReference type="PATRIC" id="fig|324602.8.peg.3069"/>
<dbReference type="eggNOG" id="COG1418">
    <property type="taxonomic scope" value="Bacteria"/>
</dbReference>
<dbReference type="HOGENOM" id="CLU_028328_1_0_0"/>
<dbReference type="InParanoid" id="A9WJM3"/>
<dbReference type="Proteomes" id="UP000002008">
    <property type="component" value="Chromosome"/>
</dbReference>
<dbReference type="GO" id="GO:0005886">
    <property type="term" value="C:plasma membrane"/>
    <property type="evidence" value="ECO:0007669"/>
    <property type="project" value="UniProtKB-SubCell"/>
</dbReference>
<dbReference type="GO" id="GO:0003723">
    <property type="term" value="F:RNA binding"/>
    <property type="evidence" value="ECO:0007669"/>
    <property type="project" value="UniProtKB-UniRule"/>
</dbReference>
<dbReference type="GO" id="GO:0004521">
    <property type="term" value="F:RNA endonuclease activity"/>
    <property type="evidence" value="ECO:0007669"/>
    <property type="project" value="UniProtKB-UniRule"/>
</dbReference>
<dbReference type="GO" id="GO:0006402">
    <property type="term" value="P:mRNA catabolic process"/>
    <property type="evidence" value="ECO:0007669"/>
    <property type="project" value="UniProtKB-UniRule"/>
</dbReference>
<dbReference type="CDD" id="cd00077">
    <property type="entry name" value="HDc"/>
    <property type="match status" value="1"/>
</dbReference>
<dbReference type="CDD" id="cd22431">
    <property type="entry name" value="KH-I_RNaseY"/>
    <property type="match status" value="1"/>
</dbReference>
<dbReference type="FunFam" id="1.10.3210.10:FF:000022">
    <property type="entry name" value="Ribonuclease Y"/>
    <property type="match status" value="1"/>
</dbReference>
<dbReference type="Gene3D" id="1.10.3210.10">
    <property type="entry name" value="Hypothetical protein af1432"/>
    <property type="match status" value="1"/>
</dbReference>
<dbReference type="Gene3D" id="3.30.1370.10">
    <property type="entry name" value="K Homology domain, type 1"/>
    <property type="match status" value="1"/>
</dbReference>
<dbReference type="HAMAP" id="MF_00335">
    <property type="entry name" value="RNase_Y"/>
    <property type="match status" value="1"/>
</dbReference>
<dbReference type="InterPro" id="IPR003607">
    <property type="entry name" value="HD/PDEase_dom"/>
</dbReference>
<dbReference type="InterPro" id="IPR006674">
    <property type="entry name" value="HD_domain"/>
</dbReference>
<dbReference type="InterPro" id="IPR006675">
    <property type="entry name" value="HDIG_dom"/>
</dbReference>
<dbReference type="InterPro" id="IPR004087">
    <property type="entry name" value="KH_dom"/>
</dbReference>
<dbReference type="InterPro" id="IPR004088">
    <property type="entry name" value="KH_dom_type_1"/>
</dbReference>
<dbReference type="InterPro" id="IPR036612">
    <property type="entry name" value="KH_dom_type_1_sf"/>
</dbReference>
<dbReference type="InterPro" id="IPR017705">
    <property type="entry name" value="Ribonuclease_Y"/>
</dbReference>
<dbReference type="InterPro" id="IPR022711">
    <property type="entry name" value="RNase_Y_N"/>
</dbReference>
<dbReference type="NCBIfam" id="TIGR00277">
    <property type="entry name" value="HDIG"/>
    <property type="match status" value="1"/>
</dbReference>
<dbReference type="NCBIfam" id="TIGR03319">
    <property type="entry name" value="RNase_Y"/>
    <property type="match status" value="1"/>
</dbReference>
<dbReference type="PANTHER" id="PTHR12826">
    <property type="entry name" value="RIBONUCLEASE Y"/>
    <property type="match status" value="1"/>
</dbReference>
<dbReference type="PANTHER" id="PTHR12826:SF15">
    <property type="entry name" value="RIBONUCLEASE Y"/>
    <property type="match status" value="1"/>
</dbReference>
<dbReference type="Pfam" id="PF01966">
    <property type="entry name" value="HD"/>
    <property type="match status" value="1"/>
</dbReference>
<dbReference type="Pfam" id="PF00013">
    <property type="entry name" value="KH_1"/>
    <property type="match status" value="1"/>
</dbReference>
<dbReference type="Pfam" id="PF12072">
    <property type="entry name" value="RNase_Y_N"/>
    <property type="match status" value="1"/>
</dbReference>
<dbReference type="SMART" id="SM00471">
    <property type="entry name" value="HDc"/>
    <property type="match status" value="1"/>
</dbReference>
<dbReference type="SMART" id="SM00322">
    <property type="entry name" value="KH"/>
    <property type="match status" value="1"/>
</dbReference>
<dbReference type="SUPFAM" id="SSF54791">
    <property type="entry name" value="Eukaryotic type KH-domain (KH-domain type I)"/>
    <property type="match status" value="1"/>
</dbReference>
<dbReference type="SUPFAM" id="SSF109604">
    <property type="entry name" value="HD-domain/PDEase-like"/>
    <property type="match status" value="1"/>
</dbReference>
<dbReference type="PROSITE" id="PS51831">
    <property type="entry name" value="HD"/>
    <property type="match status" value="1"/>
</dbReference>
<dbReference type="PROSITE" id="PS50084">
    <property type="entry name" value="KH_TYPE_1"/>
    <property type="match status" value="1"/>
</dbReference>
<name>RNY_CHLAA</name>
<proteinExistence type="inferred from homology"/>
<sequence length="510" mass="57378">MTELLWAVVALLAGLAGGAGIGVYWANNGVSSLVQRKAAEARLLIEEARSQQKEILLQAKDEALRIRNEAEAELRESRQSLQKQEERLQRKEENIDRKLEGIERRERLIQQRERQIEQLTQEAERLKRQQAQELERISQLSREEARSIILAEVERETREDAARRIRELEQQTKEEADKIARKIIGLAIQRCASDYVAEMTVSTVNLPSEELKGRIIGREGRNIRAFEQITGVDIIVDDTPEAVTLSCHDPVRREVARVALLKLLKDGRIHPSRIEEVVHKTQLEIEQIMREEGERVAYEANVQGLHPDLIKLLGRLKYRTSYGQNVLQHSLECALLAAHMAAELGANVNIAKTAALLHDIGKAVDHEVQGPHALIGAEIARRLGRSAAIVHAIAAHHYDEEPQTVEAFLVIAADAISGARPGARRETLDLYIKRLEALETVATSFPGVQRAFAVQAGREVRVMVQPDQIDDLASIHLARNVAKKIEESLQYPGQIKVTIIRETRAVDYAR</sequence>
<feature type="chain" id="PRO_0000344843" description="Ribonuclease Y">
    <location>
        <begin position="1"/>
        <end position="510"/>
    </location>
</feature>
<feature type="transmembrane region" description="Helical" evidence="1">
    <location>
        <begin position="4"/>
        <end position="24"/>
    </location>
</feature>
<feature type="domain" description="KH" evidence="1">
    <location>
        <begin position="200"/>
        <end position="260"/>
    </location>
</feature>
<feature type="domain" description="HD" evidence="2">
    <location>
        <begin position="326"/>
        <end position="419"/>
    </location>
</feature>
<organism>
    <name type="scientific">Chloroflexus aurantiacus (strain ATCC 29366 / DSM 635 / J-10-fl)</name>
    <dbReference type="NCBI Taxonomy" id="324602"/>
    <lineage>
        <taxon>Bacteria</taxon>
        <taxon>Bacillati</taxon>
        <taxon>Chloroflexota</taxon>
        <taxon>Chloroflexia</taxon>
        <taxon>Chloroflexales</taxon>
        <taxon>Chloroflexineae</taxon>
        <taxon>Chloroflexaceae</taxon>
        <taxon>Chloroflexus</taxon>
    </lineage>
</organism>
<gene>
    <name evidence="1" type="primary">rny</name>
    <name type="ordered locus">Caur_2722</name>
</gene>
<keyword id="KW-1003">Cell membrane</keyword>
<keyword id="KW-0255">Endonuclease</keyword>
<keyword id="KW-0378">Hydrolase</keyword>
<keyword id="KW-0472">Membrane</keyword>
<keyword id="KW-0540">Nuclease</keyword>
<keyword id="KW-1185">Reference proteome</keyword>
<keyword id="KW-0694">RNA-binding</keyword>
<keyword id="KW-0812">Transmembrane</keyword>
<keyword id="KW-1133">Transmembrane helix</keyword>